<reference key="1">
    <citation type="journal article" date="2006" name="J. Mol. Evol.">
        <title>Genes expressed in a turrid venom duct: divergence and similarity to conotoxins.</title>
        <authorList>
            <person name="Watkins M."/>
            <person name="Hillyard D.R."/>
            <person name="Olivera B.M."/>
        </authorList>
    </citation>
    <scope>NUCLEOTIDE SEQUENCE [MRNA]</scope>
    <source>
        <tissue>Venom duct</tissue>
    </source>
</reference>
<name>TU184_IOTOL</name>
<protein>
    <recommendedName>
        <fullName>Turripeptide OL184</fullName>
    </recommendedName>
</protein>
<keyword id="KW-1015">Disulfide bond</keyword>
<keyword id="KW-0872">Ion channel impairing toxin</keyword>
<keyword id="KW-0528">Neurotoxin</keyword>
<keyword id="KW-0964">Secreted</keyword>
<keyword id="KW-0800">Toxin</keyword>
<feature type="chain" id="PRO_0000419839" description="Turripeptide OL184">
    <location>
        <begin position="1"/>
        <end position="95"/>
    </location>
</feature>
<comment type="function">
    <text evidence="1">Acts as a neurotoxin by inhibiting an ion channel.</text>
</comment>
<comment type="subcellular location">
    <subcellularLocation>
        <location evidence="1">Secreted</location>
    </subcellularLocation>
</comment>
<comment type="tissue specificity">
    <text>Expressed by the venom duct.</text>
</comment>
<comment type="domain">
    <text>The cysteine framework is VIII (C-C-C-C-C-C-C-C-C-C).</text>
</comment>
<comment type="PTM">
    <text evidence="1">Contains 5 disulfide bonds.</text>
</comment>
<dbReference type="GO" id="GO:0005576">
    <property type="term" value="C:extracellular region"/>
    <property type="evidence" value="ECO:0007669"/>
    <property type="project" value="UniProtKB-SubCell"/>
</dbReference>
<dbReference type="GO" id="GO:0099106">
    <property type="term" value="F:ion channel regulator activity"/>
    <property type="evidence" value="ECO:0007669"/>
    <property type="project" value="UniProtKB-KW"/>
</dbReference>
<dbReference type="GO" id="GO:0090729">
    <property type="term" value="F:toxin activity"/>
    <property type="evidence" value="ECO:0007669"/>
    <property type="project" value="UniProtKB-KW"/>
</dbReference>
<organism>
    <name type="scientific">Iotyrris olangoensis</name>
    <name type="common">Sea snail</name>
    <name type="synonym">Lophiotoma olangoensis</name>
    <dbReference type="NCBI Taxonomy" id="2420066"/>
    <lineage>
        <taxon>Eukaryota</taxon>
        <taxon>Metazoa</taxon>
        <taxon>Spiralia</taxon>
        <taxon>Lophotrochozoa</taxon>
        <taxon>Mollusca</taxon>
        <taxon>Gastropoda</taxon>
        <taxon>Caenogastropoda</taxon>
        <taxon>Neogastropoda</taxon>
        <taxon>Conoidea</taxon>
        <taxon>Turridae</taxon>
        <taxon>Iotyrris</taxon>
    </lineage>
</organism>
<proteinExistence type="evidence at transcript level"/>
<sequence>AESCDPYQACVLLSAEGRRVPLCSCAGRDCPNTDSHKIQSMYFCEDVSVVYACPDTDRVAIQIINGVGNIDFKLFCRCHTYEAHRSYFSCAELIG</sequence>
<accession>P0DKM5</accession>
<evidence type="ECO:0000250" key="1"/>